<reference key="1">
    <citation type="journal article" date="1994" name="Plant Mol. Biol.">
        <title>Isolation and characterization of two tightly linked catalase genes from castor bean that are differentially regulated.</title>
        <authorList>
            <person name="Suzuki M."/>
            <person name="Ario T."/>
            <person name="Hattori T."/>
            <person name="Nakamura K."/>
            <person name="Asahi T."/>
        </authorList>
    </citation>
    <scope>NUCLEOTIDE SEQUENCE [GENOMIC DNA]</scope>
    <source>
        <tissue>Hypocotyl</tissue>
    </source>
</reference>
<name>CATA2_RICCO</name>
<keyword id="KW-0330">Glyoxysome</keyword>
<keyword id="KW-0349">Heme</keyword>
<keyword id="KW-0376">Hydrogen peroxide</keyword>
<keyword id="KW-0408">Iron</keyword>
<keyword id="KW-0479">Metal-binding</keyword>
<keyword id="KW-0560">Oxidoreductase</keyword>
<keyword id="KW-0575">Peroxidase</keyword>
<keyword id="KW-0576">Peroxisome</keyword>
<evidence type="ECO:0000250" key="1"/>
<evidence type="ECO:0000256" key="2">
    <source>
        <dbReference type="SAM" id="MobiDB-lite"/>
    </source>
</evidence>
<evidence type="ECO:0000305" key="3"/>
<accession>P49318</accession>
<comment type="function">
    <text>Occurs in almost all aerobically respiring organisms and serves to protect cells from the toxic effects of hydrogen peroxide.</text>
</comment>
<comment type="catalytic activity">
    <reaction>
        <text>2 H2O2 = O2 + 2 H2O</text>
        <dbReference type="Rhea" id="RHEA:20309"/>
        <dbReference type="ChEBI" id="CHEBI:15377"/>
        <dbReference type="ChEBI" id="CHEBI:15379"/>
        <dbReference type="ChEBI" id="CHEBI:16240"/>
        <dbReference type="EC" id="1.11.1.6"/>
    </reaction>
</comment>
<comment type="cofactor">
    <cofactor>
        <name>heme</name>
        <dbReference type="ChEBI" id="CHEBI:30413"/>
    </cofactor>
</comment>
<comment type="subunit">
    <text>Homotetramer.</text>
</comment>
<comment type="subcellular location">
    <subcellularLocation>
        <location evidence="3">Peroxisome</location>
    </subcellularLocation>
    <subcellularLocation>
        <location evidence="3">Glyoxysome</location>
    </subcellularLocation>
</comment>
<comment type="tissue specificity">
    <text>Abundant in hypocotyls and roots. Low levels are seen in the endosperms and cotyledons.</text>
</comment>
<comment type="similarity">
    <text evidence="3">Belongs to the catalase family.</text>
</comment>
<gene>
    <name type="primary">CAT2</name>
</gene>
<organism>
    <name type="scientific">Ricinus communis</name>
    <name type="common">Castor bean</name>
    <dbReference type="NCBI Taxonomy" id="3988"/>
    <lineage>
        <taxon>Eukaryota</taxon>
        <taxon>Viridiplantae</taxon>
        <taxon>Streptophyta</taxon>
        <taxon>Embryophyta</taxon>
        <taxon>Tracheophyta</taxon>
        <taxon>Spermatophyta</taxon>
        <taxon>Magnoliopsida</taxon>
        <taxon>eudicotyledons</taxon>
        <taxon>Gunneridae</taxon>
        <taxon>Pentapetalae</taxon>
        <taxon>rosids</taxon>
        <taxon>fabids</taxon>
        <taxon>Malpighiales</taxon>
        <taxon>Euphorbiaceae</taxon>
        <taxon>Acalyphoideae</taxon>
        <taxon>Acalypheae</taxon>
        <taxon>Ricinus</taxon>
    </lineage>
</organism>
<proteinExistence type="evidence at transcript level"/>
<protein>
    <recommendedName>
        <fullName>Catalase isozyme 2</fullName>
        <ecNumber>1.11.1.6</ecNumber>
    </recommendedName>
</protein>
<feature type="chain" id="PRO_0000084957" description="Catalase isozyme 2">
    <location>
        <begin position="1"/>
        <end position="492"/>
    </location>
</feature>
<feature type="region of interest" description="Disordered" evidence="2">
    <location>
        <begin position="1"/>
        <end position="32"/>
    </location>
</feature>
<feature type="compositionally biased region" description="Polar residues" evidence="2">
    <location>
        <begin position="8"/>
        <end position="32"/>
    </location>
</feature>
<feature type="active site" evidence="1">
    <location>
        <position position="65"/>
    </location>
</feature>
<feature type="active site" evidence="1">
    <location>
        <position position="138"/>
    </location>
</feature>
<feature type="binding site" description="axial binding residue" evidence="1">
    <location>
        <position position="348"/>
    </location>
    <ligand>
        <name>heme</name>
        <dbReference type="ChEBI" id="CHEBI:30413"/>
    </ligand>
    <ligandPart>
        <name>Fe</name>
        <dbReference type="ChEBI" id="CHEBI:18248"/>
    </ligandPart>
</feature>
<sequence>MDPYKFRPSSSNDTPFWTTNAGDPVSNNNSSMTVGPRGPILLEDYHMIEKLANFTRERIPERVVHARGMSAKGFFEVTHDVTDLTCADFLRAPGVQTPVIVRFSTVIHERGSPETLRDPRGFATKFYTREGNFDIVGNNFPVFFIRDGIKFPDVVHAFKPNPKSHIQEYWRIFDFCSHHPESLSTFAWFFDDVGIPQDYRHMEGFGVHTYCLINKAGKVTYVKFHWKPTCGVKCLMDDEAIKVGGANHSHATQDLYDSIAAGNFPEWKLMIQTMDPADEDKFSFDPLDMTKIWPEDMFPLHPVGRLVLNRNIDNWFAENEMLAFNPAHVVPGVYYSNDKLFQLRLFAYSDTQRHRLGTNYLQLPVNAPKCPYHNNHYDGFMNFMHRDEEVDYFQSRYDPVRHAEKVPIPNAICSGRREKCVIEKEDNFRQPGDRYRSWAPDRQERFLCRLVNALSEPRITHEIRSIWVSWWTQCDKSLGQKLASRLNVRPNI</sequence>
<dbReference type="EC" id="1.11.1.6"/>
<dbReference type="EMBL" id="D21162">
    <property type="protein sequence ID" value="BAA04698.1"/>
    <property type="molecule type" value="Genomic_DNA"/>
</dbReference>
<dbReference type="PIR" id="S46298">
    <property type="entry name" value="S46298"/>
</dbReference>
<dbReference type="SMR" id="P49318"/>
<dbReference type="eggNOG" id="KOG0047">
    <property type="taxonomic scope" value="Eukaryota"/>
</dbReference>
<dbReference type="GO" id="GO:0009514">
    <property type="term" value="C:glyoxysome"/>
    <property type="evidence" value="ECO:0007669"/>
    <property type="project" value="UniProtKB-SubCell"/>
</dbReference>
<dbReference type="GO" id="GO:0004096">
    <property type="term" value="F:catalase activity"/>
    <property type="evidence" value="ECO:0007669"/>
    <property type="project" value="UniProtKB-EC"/>
</dbReference>
<dbReference type="GO" id="GO:0020037">
    <property type="term" value="F:heme binding"/>
    <property type="evidence" value="ECO:0007669"/>
    <property type="project" value="InterPro"/>
</dbReference>
<dbReference type="GO" id="GO:0046872">
    <property type="term" value="F:metal ion binding"/>
    <property type="evidence" value="ECO:0007669"/>
    <property type="project" value="UniProtKB-KW"/>
</dbReference>
<dbReference type="GO" id="GO:0042744">
    <property type="term" value="P:hydrogen peroxide catabolic process"/>
    <property type="evidence" value="ECO:0007669"/>
    <property type="project" value="UniProtKB-KW"/>
</dbReference>
<dbReference type="GO" id="GO:0006979">
    <property type="term" value="P:response to oxidative stress"/>
    <property type="evidence" value="ECO:0007669"/>
    <property type="project" value="InterPro"/>
</dbReference>
<dbReference type="CDD" id="cd08154">
    <property type="entry name" value="catalase_clade_1"/>
    <property type="match status" value="1"/>
</dbReference>
<dbReference type="FunFam" id="2.40.180.10:FF:000002">
    <property type="entry name" value="Catalase"/>
    <property type="match status" value="1"/>
</dbReference>
<dbReference type="Gene3D" id="2.40.180.10">
    <property type="entry name" value="Catalase core domain"/>
    <property type="match status" value="1"/>
</dbReference>
<dbReference type="InterPro" id="IPR018028">
    <property type="entry name" value="Catalase"/>
</dbReference>
<dbReference type="InterPro" id="IPR024711">
    <property type="entry name" value="Catalase_clade1/3"/>
</dbReference>
<dbReference type="InterPro" id="IPR011614">
    <property type="entry name" value="Catalase_core"/>
</dbReference>
<dbReference type="InterPro" id="IPR002226">
    <property type="entry name" value="Catalase_haem_BS"/>
</dbReference>
<dbReference type="InterPro" id="IPR010582">
    <property type="entry name" value="Catalase_immune_responsive"/>
</dbReference>
<dbReference type="InterPro" id="IPR020835">
    <property type="entry name" value="Catalase_sf"/>
</dbReference>
<dbReference type="PANTHER" id="PTHR11465">
    <property type="entry name" value="CATALASE"/>
    <property type="match status" value="1"/>
</dbReference>
<dbReference type="PANTHER" id="PTHR11465:SF45">
    <property type="entry name" value="CATALASE ISOZYME A"/>
    <property type="match status" value="1"/>
</dbReference>
<dbReference type="Pfam" id="PF00199">
    <property type="entry name" value="Catalase"/>
    <property type="match status" value="1"/>
</dbReference>
<dbReference type="Pfam" id="PF06628">
    <property type="entry name" value="Catalase-rel"/>
    <property type="match status" value="1"/>
</dbReference>
<dbReference type="PIRSF" id="PIRSF038928">
    <property type="entry name" value="Catalase_clade1-3"/>
    <property type="match status" value="1"/>
</dbReference>
<dbReference type="PRINTS" id="PR00067">
    <property type="entry name" value="CATALASE"/>
</dbReference>
<dbReference type="SMART" id="SM01060">
    <property type="entry name" value="Catalase"/>
    <property type="match status" value="1"/>
</dbReference>
<dbReference type="SUPFAM" id="SSF56634">
    <property type="entry name" value="Heme-dependent catalase-like"/>
    <property type="match status" value="1"/>
</dbReference>
<dbReference type="PROSITE" id="PS00437">
    <property type="entry name" value="CATALASE_1"/>
    <property type="match status" value="1"/>
</dbReference>
<dbReference type="PROSITE" id="PS51402">
    <property type="entry name" value="CATALASE_3"/>
    <property type="match status" value="1"/>
</dbReference>